<sequence length="824" mass="91994">MSNPVCISNSTNGSSNSLNGESVSPNRLGSSPGSPISKASSFDLNGKKPTKSNVVRLLLNRTNSGSNLLSKRRTSETGDDDSNSSVGLLNNSTGSIGKMNTPESSPKSSYILSSSIGSGGSGGGGGSSGSLQNLDSASNNSSGPRSRSGSLGKNNSSQQNNNNLILDPNFNNIDKSLWTVRSLKEHSNLVDIMERIKPASRAISFGQIYASEETQFEFDPVIGRDNILQLILQHLQFEGLMDSRKILEEEAKIQYPEYTFNESRLVTLLRAVIKDSDKVFDLTLNDRDKDSQQKLEEHLAFLGLFKDESQTNMVEDVNIYDEPENSNIIYVDEKDNDKPSKDSPTTATTTTTATTIAPSTSINNLSSLSVSISSNNINNNNNNNNNINNLNSTQLISNTQQQQATPNTPPQGLKSTQSITGSTGTLGPQVKAASLNKLVILLTPENNHDLEYTKTFLLMYQSFTTPEILLQKLIQRYHVPQKAGQSVAEWRQRSTHIQLRVLNVLKTWIKDYFSDFSEKLILAIKSLLESMRQTGNMSYAKVISDALNSGLKKSGRNNTVFTVSAPEPKVPKNIWSHNLDIFSVDEEEISRQLTLMDFEIFSNIKSTELLNQCWNKPKLRHRSPNVLELIGRFNEISQWTATSILSWPKVKDRARIMGKFIKIAEYCMKHLNNFNTSMAILSGLNASSVHRLKFTKEELPRHTQQVYTELQFHLSSAQAYKEYRALLAKANPPCLPYLGVYLTDLTFFEEGNPDFIQGFINFGKRKLIYGSISNVQSFQNTKYNLQPVYQIAKLLKGFKLLEENELYTRSMSFEPRNKERSEIL</sequence>
<reference key="1">
    <citation type="journal article" date="2005" name="Genome Biol.">
        <title>The Dictyostelium genome encodes numerous RasGEFs with multiple biological roles.</title>
        <authorList>
            <person name="Wilkins A."/>
            <person name="Szafranski K."/>
            <person name="Fraser D.J."/>
            <person name="Bakthavatsalam D."/>
            <person name="Mueller R."/>
            <person name="Fisher P.R."/>
            <person name="Gloeckner G."/>
            <person name="Eichinger L."/>
            <person name="Noegel A.A."/>
            <person name="Insall R.H."/>
        </authorList>
    </citation>
    <scope>NUCLEOTIDE SEQUENCE [GENOMIC DNA]</scope>
    <scope>DEVELOPMENTAL STAGE</scope>
    <source>
        <strain>AX4</strain>
    </source>
</reference>
<reference key="2">
    <citation type="journal article" date="2005" name="Nature">
        <title>The genome of the social amoeba Dictyostelium discoideum.</title>
        <authorList>
            <person name="Eichinger L."/>
            <person name="Pachebat J.A."/>
            <person name="Gloeckner G."/>
            <person name="Rajandream M.A."/>
            <person name="Sucgang R."/>
            <person name="Berriman M."/>
            <person name="Song J."/>
            <person name="Olsen R."/>
            <person name="Szafranski K."/>
            <person name="Xu Q."/>
            <person name="Tunggal B."/>
            <person name="Kummerfeld S."/>
            <person name="Madera M."/>
            <person name="Konfortov B.A."/>
            <person name="Rivero F."/>
            <person name="Bankier A.T."/>
            <person name="Lehmann R."/>
            <person name="Hamlin N."/>
            <person name="Davies R."/>
            <person name="Gaudet P."/>
            <person name="Fey P."/>
            <person name="Pilcher K."/>
            <person name="Chen G."/>
            <person name="Saunders D."/>
            <person name="Sodergren E.J."/>
            <person name="Davis P."/>
            <person name="Kerhornou A."/>
            <person name="Nie X."/>
            <person name="Hall N."/>
            <person name="Anjard C."/>
            <person name="Hemphill L."/>
            <person name="Bason N."/>
            <person name="Farbrother P."/>
            <person name="Desany B."/>
            <person name="Just E."/>
            <person name="Morio T."/>
            <person name="Rost R."/>
            <person name="Churcher C.M."/>
            <person name="Cooper J."/>
            <person name="Haydock S."/>
            <person name="van Driessche N."/>
            <person name="Cronin A."/>
            <person name="Goodhead I."/>
            <person name="Muzny D.M."/>
            <person name="Mourier T."/>
            <person name="Pain A."/>
            <person name="Lu M."/>
            <person name="Harper D."/>
            <person name="Lindsay R."/>
            <person name="Hauser H."/>
            <person name="James K.D."/>
            <person name="Quiles M."/>
            <person name="Madan Babu M."/>
            <person name="Saito T."/>
            <person name="Buchrieser C."/>
            <person name="Wardroper A."/>
            <person name="Felder M."/>
            <person name="Thangavelu M."/>
            <person name="Johnson D."/>
            <person name="Knights A."/>
            <person name="Loulseged H."/>
            <person name="Mungall K.L."/>
            <person name="Oliver K."/>
            <person name="Price C."/>
            <person name="Quail M.A."/>
            <person name="Urushihara H."/>
            <person name="Hernandez J."/>
            <person name="Rabbinowitsch E."/>
            <person name="Steffen D."/>
            <person name="Sanders M."/>
            <person name="Ma J."/>
            <person name="Kohara Y."/>
            <person name="Sharp S."/>
            <person name="Simmonds M.N."/>
            <person name="Spiegler S."/>
            <person name="Tivey A."/>
            <person name="Sugano S."/>
            <person name="White B."/>
            <person name="Walker D."/>
            <person name="Woodward J.R."/>
            <person name="Winckler T."/>
            <person name="Tanaka Y."/>
            <person name="Shaulsky G."/>
            <person name="Schleicher M."/>
            <person name="Weinstock G.M."/>
            <person name="Rosenthal A."/>
            <person name="Cox E.C."/>
            <person name="Chisholm R.L."/>
            <person name="Gibbs R.A."/>
            <person name="Loomis W.F."/>
            <person name="Platzer M."/>
            <person name="Kay R.R."/>
            <person name="Williams J.G."/>
            <person name="Dear P.H."/>
            <person name="Noegel A.A."/>
            <person name="Barrell B.G."/>
            <person name="Kuspa A."/>
        </authorList>
    </citation>
    <scope>NUCLEOTIDE SEQUENCE [LARGE SCALE GENOMIC DNA]</scope>
    <source>
        <strain>AX4</strain>
    </source>
</reference>
<reference key="3">
    <citation type="journal article" date="2008" name="BMC Microbiol.">
        <title>Dictyostelium transcriptional responses to Pseudomonas aeruginosa: common and specific effects from PAO1 and PA14 strains.</title>
        <authorList>
            <person name="Carilla-Latorre S."/>
            <person name="Calvo-Garrido J."/>
            <person name="Bloomfield G."/>
            <person name="Skelton J."/>
            <person name="Kay R.R."/>
            <person name="Ivens A."/>
            <person name="Martinez J.L."/>
            <person name="Escalante R."/>
        </authorList>
    </citation>
    <scope>INDUCTION [LARGE SCALE ANALYSIS]</scope>
</reference>
<reference key="4">
    <citation type="journal article" date="2008" name="BMC Genomics">
        <title>Genome-wide transcriptional changes induced by phagocytosis or growth on bacteria in Dictyostelium.</title>
        <authorList>
            <person name="Sillo A."/>
            <person name="Bloomfield G."/>
            <person name="Balest A."/>
            <person name="Balbo A."/>
            <person name="Pergolizzi B."/>
            <person name="Peracino B."/>
            <person name="Skelton J."/>
            <person name="Ivens A."/>
            <person name="Bozzaro S."/>
        </authorList>
    </citation>
    <scope>IDENTIFICATION</scope>
</reference>
<name>GEFI_DICDI</name>
<dbReference type="EMBL" id="AY160098">
    <property type="protein sequence ID" value="AAN46878.1"/>
    <property type="molecule type" value="Genomic_DNA"/>
</dbReference>
<dbReference type="EMBL" id="AAFI02000023">
    <property type="protein sequence ID" value="EAL68130.1"/>
    <property type="molecule type" value="Genomic_DNA"/>
</dbReference>
<dbReference type="RefSeq" id="XP_642150.1">
    <property type="nucleotide sequence ID" value="XM_637058.1"/>
</dbReference>
<dbReference type="SMR" id="Q8IS15"/>
<dbReference type="FunCoup" id="Q8IS15">
    <property type="interactions" value="55"/>
</dbReference>
<dbReference type="STRING" id="44689.Q8IS15"/>
<dbReference type="PaxDb" id="44689-DDB0215006"/>
<dbReference type="EnsemblProtists" id="EAL68130">
    <property type="protein sequence ID" value="EAL68130"/>
    <property type="gene ID" value="DDB_G0277915"/>
</dbReference>
<dbReference type="GeneID" id="8621358"/>
<dbReference type="KEGG" id="ddi:DDB_G0277915"/>
<dbReference type="dictyBase" id="DDB_G0277915">
    <property type="gene designation" value="gefI"/>
</dbReference>
<dbReference type="VEuPathDB" id="AmoebaDB:DDB_G0277915"/>
<dbReference type="eggNOG" id="KOG3417">
    <property type="taxonomic scope" value="Eukaryota"/>
</dbReference>
<dbReference type="HOGENOM" id="CLU_343697_0_0_1"/>
<dbReference type="InParanoid" id="Q8IS15"/>
<dbReference type="OMA" id="PKNIWSH"/>
<dbReference type="PhylomeDB" id="Q8IS15"/>
<dbReference type="Reactome" id="R-DDI-193648">
    <property type="pathway name" value="NRAGE signals death through JNK"/>
</dbReference>
<dbReference type="Reactome" id="R-DDI-9013148">
    <property type="pathway name" value="CDC42 GTPase cycle"/>
</dbReference>
<dbReference type="Reactome" id="R-DDI-9013149">
    <property type="pathway name" value="RAC1 GTPase cycle"/>
</dbReference>
<dbReference type="PRO" id="PR:Q8IS15"/>
<dbReference type="Proteomes" id="UP000002195">
    <property type="component" value="Chromosome 3"/>
</dbReference>
<dbReference type="GO" id="GO:0005886">
    <property type="term" value="C:plasma membrane"/>
    <property type="evidence" value="ECO:0000318"/>
    <property type="project" value="GO_Central"/>
</dbReference>
<dbReference type="GO" id="GO:0005085">
    <property type="term" value="F:guanyl-nucleotide exchange factor activity"/>
    <property type="evidence" value="ECO:0000318"/>
    <property type="project" value="GO_Central"/>
</dbReference>
<dbReference type="GO" id="GO:0007265">
    <property type="term" value="P:Ras protein signal transduction"/>
    <property type="evidence" value="ECO:0000318"/>
    <property type="project" value="GO_Central"/>
</dbReference>
<dbReference type="CDD" id="cd00155">
    <property type="entry name" value="RasGEF"/>
    <property type="match status" value="1"/>
</dbReference>
<dbReference type="CDD" id="cd06224">
    <property type="entry name" value="REM"/>
    <property type="match status" value="1"/>
</dbReference>
<dbReference type="Gene3D" id="1.10.840.10">
    <property type="entry name" value="Ras guanine-nucleotide exchange factors catalytic domain"/>
    <property type="match status" value="1"/>
</dbReference>
<dbReference type="Gene3D" id="1.20.870.10">
    <property type="entry name" value="Son of sevenless (SoS) protein Chain: S domain 1"/>
    <property type="match status" value="1"/>
</dbReference>
<dbReference type="InterPro" id="IPR006594">
    <property type="entry name" value="LisH"/>
</dbReference>
<dbReference type="InterPro" id="IPR008937">
    <property type="entry name" value="Ras-like_GEF"/>
</dbReference>
<dbReference type="InterPro" id="IPR000651">
    <property type="entry name" value="Ras-like_Gua-exchang_fac_N"/>
</dbReference>
<dbReference type="InterPro" id="IPR023578">
    <property type="entry name" value="Ras_GEF_dom_sf"/>
</dbReference>
<dbReference type="InterPro" id="IPR001895">
    <property type="entry name" value="RASGEF_cat_dom"/>
</dbReference>
<dbReference type="InterPro" id="IPR036964">
    <property type="entry name" value="RASGEF_cat_dom_sf"/>
</dbReference>
<dbReference type="PANTHER" id="PTHR23113">
    <property type="entry name" value="GUANINE NUCLEOTIDE EXCHANGE FACTOR"/>
    <property type="match status" value="1"/>
</dbReference>
<dbReference type="PANTHER" id="PTHR23113:SF351">
    <property type="entry name" value="RAS GUANINE NUCLEOTIDE EXCHANGE FACTOR I-RELATED"/>
    <property type="match status" value="1"/>
</dbReference>
<dbReference type="Pfam" id="PF00617">
    <property type="entry name" value="RasGEF"/>
    <property type="match status" value="1"/>
</dbReference>
<dbReference type="Pfam" id="PF00618">
    <property type="entry name" value="RasGEF_N"/>
    <property type="match status" value="1"/>
</dbReference>
<dbReference type="SMART" id="SM00147">
    <property type="entry name" value="RasGEF"/>
    <property type="match status" value="1"/>
</dbReference>
<dbReference type="SMART" id="SM00229">
    <property type="entry name" value="RasGEFN"/>
    <property type="match status" value="1"/>
</dbReference>
<dbReference type="SUPFAM" id="SSF48366">
    <property type="entry name" value="Ras GEF"/>
    <property type="match status" value="1"/>
</dbReference>
<dbReference type="PROSITE" id="PS50896">
    <property type="entry name" value="LISH"/>
    <property type="match status" value="1"/>
</dbReference>
<dbReference type="PROSITE" id="PS50009">
    <property type="entry name" value="RASGEF_CAT"/>
    <property type="match status" value="1"/>
</dbReference>
<dbReference type="PROSITE" id="PS50212">
    <property type="entry name" value="RASGEF_NTER"/>
    <property type="match status" value="1"/>
</dbReference>
<comment type="function">
    <text evidence="1">Promotes the exchange of Ras-bound GDP by GTP.</text>
</comment>
<comment type="developmental stage">
    <text evidence="6">Expressed during development; with a peak of expression at 12 hours.</text>
</comment>
<comment type="induction">
    <text evidence="7">Up-regulated by Pseudomonas aeruginosa, PAO1 strain and PA14 strain infection and down-regulated by phagocytic stimuli.</text>
</comment>
<evidence type="ECO:0000250" key="1"/>
<evidence type="ECO:0000255" key="2">
    <source>
        <dbReference type="PROSITE-ProRule" id="PRU00126"/>
    </source>
</evidence>
<evidence type="ECO:0000255" key="3">
    <source>
        <dbReference type="PROSITE-ProRule" id="PRU00135"/>
    </source>
</evidence>
<evidence type="ECO:0000255" key="4">
    <source>
        <dbReference type="PROSITE-ProRule" id="PRU00168"/>
    </source>
</evidence>
<evidence type="ECO:0000256" key="5">
    <source>
        <dbReference type="SAM" id="MobiDB-lite"/>
    </source>
</evidence>
<evidence type="ECO:0000269" key="6">
    <source>
    </source>
</evidence>
<evidence type="ECO:0000269" key="7">
    <source>
    </source>
</evidence>
<feature type="chain" id="PRO_0000384467" description="Ras guanine nucleotide exchange factor I">
    <location>
        <begin position="1"/>
        <end position="824"/>
    </location>
</feature>
<feature type="domain" description="LisH" evidence="2">
    <location>
        <begin position="223"/>
        <end position="255"/>
    </location>
</feature>
<feature type="domain" description="N-terminal Ras-GEF" evidence="3">
    <location>
        <begin position="426"/>
        <end position="551"/>
    </location>
</feature>
<feature type="domain" description="Ras-GEF" evidence="4">
    <location>
        <begin position="585"/>
        <end position="816"/>
    </location>
</feature>
<feature type="region of interest" description="Disordered" evidence="5">
    <location>
        <begin position="1"/>
        <end position="51"/>
    </location>
</feature>
<feature type="region of interest" description="Disordered" evidence="5">
    <location>
        <begin position="65"/>
        <end position="167"/>
    </location>
</feature>
<feature type="region of interest" description="Disordered" evidence="5">
    <location>
        <begin position="330"/>
        <end position="354"/>
    </location>
</feature>
<feature type="region of interest" description="Disordered" evidence="5">
    <location>
        <begin position="398"/>
        <end position="425"/>
    </location>
</feature>
<feature type="compositionally biased region" description="Low complexity" evidence="5">
    <location>
        <begin position="8"/>
        <end position="41"/>
    </location>
</feature>
<feature type="compositionally biased region" description="Polar residues" evidence="5">
    <location>
        <begin position="83"/>
        <end position="95"/>
    </location>
</feature>
<feature type="compositionally biased region" description="Low complexity" evidence="5">
    <location>
        <begin position="104"/>
        <end position="116"/>
    </location>
</feature>
<feature type="compositionally biased region" description="Gly residues" evidence="5">
    <location>
        <begin position="117"/>
        <end position="128"/>
    </location>
</feature>
<feature type="compositionally biased region" description="Low complexity" evidence="5">
    <location>
        <begin position="136"/>
        <end position="167"/>
    </location>
</feature>
<feature type="compositionally biased region" description="Basic and acidic residues" evidence="5">
    <location>
        <begin position="331"/>
        <end position="341"/>
    </location>
</feature>
<feature type="compositionally biased region" description="Low complexity" evidence="5">
    <location>
        <begin position="343"/>
        <end position="354"/>
    </location>
</feature>
<feature type="compositionally biased region" description="Polar residues" evidence="5">
    <location>
        <begin position="413"/>
        <end position="425"/>
    </location>
</feature>
<gene>
    <name type="primary">gefI</name>
    <name type="synonym">rasGEFI</name>
    <name type="ORF">DDB_G0277915</name>
</gene>
<keyword id="KW-0344">Guanine-nucleotide releasing factor</keyword>
<keyword id="KW-1185">Reference proteome</keyword>
<accession>Q8IS15</accession>
<accession>Q54YQ2</accession>
<organism>
    <name type="scientific">Dictyostelium discoideum</name>
    <name type="common">Social amoeba</name>
    <dbReference type="NCBI Taxonomy" id="44689"/>
    <lineage>
        <taxon>Eukaryota</taxon>
        <taxon>Amoebozoa</taxon>
        <taxon>Evosea</taxon>
        <taxon>Eumycetozoa</taxon>
        <taxon>Dictyostelia</taxon>
        <taxon>Dictyosteliales</taxon>
        <taxon>Dictyosteliaceae</taxon>
        <taxon>Dictyostelium</taxon>
    </lineage>
</organism>
<protein>
    <recommendedName>
        <fullName>Ras guanine nucleotide exchange factor I</fullName>
    </recommendedName>
    <alternativeName>
        <fullName>RasGEF domain-containing protein I</fullName>
    </alternativeName>
</protein>
<proteinExistence type="evidence at transcript level"/>